<accession>C1GP85</accession>
<reference key="1">
    <citation type="journal article" date="2011" name="PLoS Genet.">
        <title>Comparative genomic analysis of human fungal pathogens causing paracoccidioidomycosis.</title>
        <authorList>
            <person name="Desjardins C.A."/>
            <person name="Champion M.D."/>
            <person name="Holder J.W."/>
            <person name="Muszewska A."/>
            <person name="Goldberg J."/>
            <person name="Bailao A.M."/>
            <person name="Brigido M.M."/>
            <person name="Ferreira M.E."/>
            <person name="Garcia A.M."/>
            <person name="Grynberg M."/>
            <person name="Gujja S."/>
            <person name="Heiman D.I."/>
            <person name="Henn M.R."/>
            <person name="Kodira C.D."/>
            <person name="Leon-Narvaez H."/>
            <person name="Longo L.V.G."/>
            <person name="Ma L.-J."/>
            <person name="Malavazi I."/>
            <person name="Matsuo A.L."/>
            <person name="Morais F.V."/>
            <person name="Pereira M."/>
            <person name="Rodriguez-Brito S."/>
            <person name="Sakthikumar S."/>
            <person name="Salem-Izacc S.M."/>
            <person name="Sykes S.M."/>
            <person name="Teixeira M.M."/>
            <person name="Vallejo M.C."/>
            <person name="Walter M.E."/>
            <person name="Yandava C."/>
            <person name="Young S."/>
            <person name="Zeng Q."/>
            <person name="Zucker J."/>
            <person name="Felipe M.S."/>
            <person name="Goldman G.H."/>
            <person name="Haas B.J."/>
            <person name="McEwen J.G."/>
            <person name="Nino-Vega G."/>
            <person name="Puccia R."/>
            <person name="San-Blas G."/>
            <person name="Soares C.M."/>
            <person name="Birren B.W."/>
            <person name="Cuomo C.A."/>
        </authorList>
    </citation>
    <scope>NUCLEOTIDE SEQUENCE [LARGE SCALE GENOMIC DNA]</scope>
    <source>
        <strain>ATCC MYA-826 / Pb01</strain>
    </source>
</reference>
<evidence type="ECO:0000250" key="1"/>
<evidence type="ECO:0000255" key="2"/>
<evidence type="ECO:0000256" key="3">
    <source>
        <dbReference type="SAM" id="MobiDB-lite"/>
    </source>
</evidence>
<evidence type="ECO:0000305" key="4"/>
<name>KEX1_PARBA</name>
<protein>
    <recommendedName>
        <fullName>Pheromone-processing carboxypeptidase KEX1</fullName>
        <ecNumber>3.4.16.6</ecNumber>
    </recommendedName>
    <alternativeName>
        <fullName>Carboxypeptidase D</fullName>
    </alternativeName>
</protein>
<keyword id="KW-0053">Apoptosis</keyword>
<keyword id="KW-0121">Carboxypeptidase</keyword>
<keyword id="KW-0325">Glycoprotein</keyword>
<keyword id="KW-0333">Golgi apparatus</keyword>
<keyword id="KW-0378">Hydrolase</keyword>
<keyword id="KW-0472">Membrane</keyword>
<keyword id="KW-0645">Protease</keyword>
<keyword id="KW-1185">Reference proteome</keyword>
<keyword id="KW-0732">Signal</keyword>
<keyword id="KW-0812">Transmembrane</keyword>
<keyword id="KW-1133">Transmembrane helix</keyword>
<comment type="function">
    <text evidence="1">Protease with a carboxypeptidase B-like function involved in the C-terminal processing of the lysine and arginine residues from protein precursors. Promotes cell fusion and is involved in the programmed cell death (By similarity).</text>
</comment>
<comment type="catalytic activity">
    <reaction>
        <text>Preferential release of a C-terminal arginine or lysine residue.</text>
        <dbReference type="EC" id="3.4.16.6"/>
    </reaction>
</comment>
<comment type="subcellular location">
    <subcellularLocation>
        <location evidence="1">Golgi apparatus</location>
        <location evidence="1">trans-Golgi network membrane</location>
        <topology evidence="1">Single-pass type I membrane protein</topology>
    </subcellularLocation>
</comment>
<comment type="similarity">
    <text evidence="4">Belongs to the peptidase S10 family.</text>
</comment>
<feature type="signal peptide" evidence="2">
    <location>
        <begin position="1"/>
        <end position="24"/>
    </location>
</feature>
<feature type="chain" id="PRO_0000411931" description="Pheromone-processing carboxypeptidase KEX1">
    <location>
        <begin position="25"/>
        <end position="640"/>
    </location>
</feature>
<feature type="topological domain" description="Lumenal" evidence="2">
    <location>
        <begin position="25"/>
        <end position="520"/>
    </location>
</feature>
<feature type="transmembrane region" description="Helical" evidence="2">
    <location>
        <begin position="521"/>
        <end position="541"/>
    </location>
</feature>
<feature type="topological domain" description="Cytoplasmic" evidence="2">
    <location>
        <begin position="542"/>
        <end position="640"/>
    </location>
</feature>
<feature type="region of interest" description="Disordered" evidence="3">
    <location>
        <begin position="478"/>
        <end position="503"/>
    </location>
</feature>
<feature type="region of interest" description="Disordered" evidence="3">
    <location>
        <begin position="590"/>
        <end position="640"/>
    </location>
</feature>
<feature type="compositionally biased region" description="Polar residues" evidence="3">
    <location>
        <begin position="489"/>
        <end position="501"/>
    </location>
</feature>
<feature type="compositionally biased region" description="Polar residues" evidence="3">
    <location>
        <begin position="594"/>
        <end position="606"/>
    </location>
</feature>
<feature type="active site" evidence="1">
    <location>
        <position position="185"/>
    </location>
</feature>
<feature type="active site" evidence="1">
    <location>
        <position position="387"/>
    </location>
</feature>
<feature type="active site" evidence="1">
    <location>
        <position position="449"/>
    </location>
</feature>
<feature type="glycosylation site" description="N-linked (GlcNAc...) asparagine" evidence="2">
    <location>
        <position position="118"/>
    </location>
</feature>
<feature type="glycosylation site" description="N-linked (GlcNAc...) asparagine" evidence="2">
    <location>
        <position position="438"/>
    </location>
</feature>
<feature type="glycosylation site" description="N-linked (GlcNAc...) asparagine" evidence="2">
    <location>
        <position position="446"/>
    </location>
</feature>
<feature type="glycosylation site" description="N-linked (GlcNAc...) asparagine" evidence="2">
    <location>
        <position position="498"/>
    </location>
</feature>
<dbReference type="EC" id="3.4.16.6"/>
<dbReference type="EMBL" id="KN293992">
    <property type="protein sequence ID" value="EEH36007.1"/>
    <property type="molecule type" value="Genomic_DNA"/>
</dbReference>
<dbReference type="RefSeq" id="XP_002797791.1">
    <property type="nucleotide sequence ID" value="XM_002797745.2"/>
</dbReference>
<dbReference type="SMR" id="C1GP85"/>
<dbReference type="STRING" id="502779.C1GP85"/>
<dbReference type="ESTHER" id="parba-kex1">
    <property type="family name" value="Carboxypeptidase_S10"/>
</dbReference>
<dbReference type="MEROPS" id="S10.007"/>
<dbReference type="GlyCosmos" id="C1GP85">
    <property type="glycosylation" value="4 sites, No reported glycans"/>
</dbReference>
<dbReference type="GeneID" id="9100876"/>
<dbReference type="KEGG" id="pbl:PAAG_00330"/>
<dbReference type="VEuPathDB" id="FungiDB:PAAG_00330"/>
<dbReference type="eggNOG" id="KOG1282">
    <property type="taxonomic scope" value="Eukaryota"/>
</dbReference>
<dbReference type="HOGENOM" id="CLU_008523_11_0_1"/>
<dbReference type="OMA" id="EMADQFV"/>
<dbReference type="OrthoDB" id="443318at2759"/>
<dbReference type="Proteomes" id="UP000002059">
    <property type="component" value="Partially assembled WGS sequence"/>
</dbReference>
<dbReference type="GO" id="GO:0016020">
    <property type="term" value="C:membrane"/>
    <property type="evidence" value="ECO:0007669"/>
    <property type="project" value="UniProtKB-KW"/>
</dbReference>
<dbReference type="GO" id="GO:0005802">
    <property type="term" value="C:trans-Golgi network"/>
    <property type="evidence" value="ECO:0007669"/>
    <property type="project" value="TreeGrafter"/>
</dbReference>
<dbReference type="GO" id="GO:0004185">
    <property type="term" value="F:serine-type carboxypeptidase activity"/>
    <property type="evidence" value="ECO:0007669"/>
    <property type="project" value="UniProtKB-EC"/>
</dbReference>
<dbReference type="GO" id="GO:0006915">
    <property type="term" value="P:apoptotic process"/>
    <property type="evidence" value="ECO:0007669"/>
    <property type="project" value="UniProtKB-KW"/>
</dbReference>
<dbReference type="GO" id="GO:0006508">
    <property type="term" value="P:proteolysis"/>
    <property type="evidence" value="ECO:0007669"/>
    <property type="project" value="UniProtKB-KW"/>
</dbReference>
<dbReference type="FunFam" id="3.40.50.1820:FF:000121">
    <property type="entry name" value="Carboxypeptidase D"/>
    <property type="match status" value="1"/>
</dbReference>
<dbReference type="Gene3D" id="3.40.50.1820">
    <property type="entry name" value="alpha/beta hydrolase"/>
    <property type="match status" value="1"/>
</dbReference>
<dbReference type="InterPro" id="IPR029058">
    <property type="entry name" value="AB_hydrolase_fold"/>
</dbReference>
<dbReference type="InterPro" id="IPR001563">
    <property type="entry name" value="Peptidase_S10"/>
</dbReference>
<dbReference type="PANTHER" id="PTHR11802:SF190">
    <property type="entry name" value="PHEROMONE-PROCESSING CARBOXYPEPTIDASE KEX1"/>
    <property type="match status" value="1"/>
</dbReference>
<dbReference type="PANTHER" id="PTHR11802">
    <property type="entry name" value="SERINE PROTEASE FAMILY S10 SERINE CARBOXYPEPTIDASE"/>
    <property type="match status" value="1"/>
</dbReference>
<dbReference type="Pfam" id="PF00450">
    <property type="entry name" value="Peptidase_S10"/>
    <property type="match status" value="1"/>
</dbReference>
<dbReference type="PRINTS" id="PR00724">
    <property type="entry name" value="CRBOXYPTASEC"/>
</dbReference>
<dbReference type="SUPFAM" id="SSF53474">
    <property type="entry name" value="alpha/beta-Hydrolases"/>
    <property type="match status" value="1"/>
</dbReference>
<organism>
    <name type="scientific">Paracoccidioides lutzii (strain ATCC MYA-826 / Pb01)</name>
    <name type="common">Paracoccidioides brasiliensis</name>
    <dbReference type="NCBI Taxonomy" id="502779"/>
    <lineage>
        <taxon>Eukaryota</taxon>
        <taxon>Fungi</taxon>
        <taxon>Dikarya</taxon>
        <taxon>Ascomycota</taxon>
        <taxon>Pezizomycotina</taxon>
        <taxon>Eurotiomycetes</taxon>
        <taxon>Eurotiomycetidae</taxon>
        <taxon>Onygenales</taxon>
        <taxon>Ajellomycetaceae</taxon>
        <taxon>Paracoccidioides</taxon>
    </lineage>
</organism>
<proteinExistence type="inferred from homology"/>
<gene>
    <name type="primary">KEX1</name>
    <name type="ORF">PAAG_00330</name>
</gene>
<sequence>MGFSGSRANTALGAWSKWLTLCLAMTQPFSVTAKSAADYYVHSLPGQPEGPLLKMHAGHIEISPETSGNLFFWHFENRHIADKPRTVVWLNGGPGCSSEDGALMEIGPYRLIDKETLNYTEGSWDEFANLLFVDQPVGTGFSYGSTEHYVHELDEMASQFVTFLEKWFEIFPHYEPDDLYFAGESYAGQYIPYIARAILDRNKKQDVLANNRVWNLKGLLIGNGWISPQHQYPAYLPYVYQEGVVQGGTQEANLIEAKAAKCMKELNVEDTTGTVHIPDCEDILQAILDYTHKGKRCINMYDIRLTDEYSACGMNWPPDLKDVQPYLRRKDVVKALHINEEKQTGWTECAGAVGSSFKARKSKPAVELLPGLLEEGLPILLFSGQKDLICNHIGTEDMIKNMKWSGGTGFELSPGVWAPRQYWTFEGEPAGIYQQARNLTYVLFYNASHMVPFDYPRRTRDMLDKFLGVDITHIGGDPADSRIDGEKGPTTSVGAHPNSTAAAEREKEKLNTAAWKAYYKSGEVALIIVSTAAVVWGIFLWRSRRKHQSSGYRSIYPMLGLNSTGSLGRFSHKHSRGNGDIEAADFDETELDGQPSQAFLSRSSGDGETYAVGEESSDEEDGASDGQQLMFDQSRGEGRS</sequence>